<proteinExistence type="evidence at protein level"/>
<keyword id="KW-1003">Cell membrane</keyword>
<keyword id="KW-0333">Golgi apparatus</keyword>
<keyword id="KW-1017">Isopeptide bond</keyword>
<keyword id="KW-0472">Membrane</keyword>
<keyword id="KW-1185">Reference proteome</keyword>
<keyword id="KW-0832">Ubl conjugation</keyword>
<reference key="1">
    <citation type="journal article" date="1995" name="FEBS Lett.">
        <title>M-caveolin, a muscle-specific caveolin-related protein.</title>
        <authorList>
            <person name="Way M."/>
            <person name="Parton R.G."/>
        </authorList>
    </citation>
    <scope>NUCLEOTIDE SEQUENCE [MRNA]</scope>
    <scope>TISSUE SPECIFICITY</scope>
    <source>
        <strain>BALB/cJ</strain>
        <tissue>Skeletal muscle</tissue>
    </source>
</reference>
<reference key="2">
    <citation type="journal article" date="1996" name="FEBS Lett.">
        <authorList>
            <person name="Way M."/>
            <person name="Parton R.G."/>
        </authorList>
    </citation>
    <scope>ERRATUM OF PUBMED:8521953</scope>
</reference>
<reference key="3">
    <citation type="journal article" date="2004" name="Genome Res.">
        <title>The status, quality, and expansion of the NIH full-length cDNA project: the Mammalian Gene Collection (MGC).</title>
        <authorList>
            <consortium name="The MGC Project Team"/>
        </authorList>
    </citation>
    <scope>NUCLEOTIDE SEQUENCE [LARGE SCALE MRNA]</scope>
    <source>
        <strain>FVB/N</strain>
        <tissue>Colon</tissue>
    </source>
</reference>
<reference key="4">
    <citation type="journal article" date="2009" name="J. Biol. Chem.">
        <title>Membrane repair defects in muscular dystrophy are linked to altered interaction between MG53, caveolin-3, and dysferlin.</title>
        <authorList>
            <person name="Cai C."/>
            <person name="Weisleder N."/>
            <person name="Ko J.-K."/>
            <person name="Komazaki S."/>
            <person name="Sunada Y."/>
            <person name="Nishi M."/>
            <person name="Takeshima H."/>
            <person name="Ma J."/>
        </authorList>
    </citation>
    <scope>FUNCTION</scope>
    <scope>INTERACTION WITH TRIM72</scope>
    <scope>MUTAGENESIS OF ARG-27 AND PRO-105</scope>
</reference>
<reference key="5">
    <citation type="journal article" date="2010" name="Cell">
        <title>A tissue-specific atlas of mouse protein phosphorylation and expression.</title>
        <authorList>
            <person name="Huttlin E.L."/>
            <person name="Jedrychowski M.P."/>
            <person name="Elias J.E."/>
            <person name="Goswami T."/>
            <person name="Rad R."/>
            <person name="Beausoleil S.A."/>
            <person name="Villen J."/>
            <person name="Haas W."/>
            <person name="Sowa M.E."/>
            <person name="Gygi S.P."/>
        </authorList>
    </citation>
    <scope>IDENTIFICATION BY MASS SPECTROMETRY [LARGE SCALE ANALYSIS]</scope>
    <source>
        <tissue>Brown adipose tissue</tissue>
        <tissue>Heart</tissue>
        <tissue>Lung</tissue>
    </source>
</reference>
<reference key="6">
    <citation type="journal article" date="2010" name="Mol. Biol. Cell">
        <title>Caveolin-3 promotes nicotinic acetylcholine receptor clustering and regulates neuromuscular junction activity.</title>
        <authorList>
            <person name="Hezel M."/>
            <person name="de Groat W.C."/>
            <person name="Galbiati F."/>
        </authorList>
    </citation>
    <scope>INTERACTION WITH MUSK</scope>
</reference>
<reference key="7">
    <citation type="journal article" date="2013" name="PLoS ONE">
        <title>Popeye domain containing 1 (Popdc1/Bves) is a caveolae-associated protein involved in ischemia tolerance.</title>
        <authorList>
            <person name="Alcalay Y."/>
            <person name="Hochhauser E."/>
            <person name="Kliminski V."/>
            <person name="Dick J."/>
            <person name="Zahalka M.A."/>
            <person name="Parnes D."/>
            <person name="Schlesinger H."/>
            <person name="Abassi Z."/>
            <person name="Shainberg A."/>
            <person name="Schindler R.F."/>
            <person name="Brand T."/>
            <person name="Kessler-Icekson G."/>
        </authorList>
    </citation>
    <scope>INTERACTION WITH POPDC1</scope>
    <scope>SUBCELLULAR LOCATION</scope>
</reference>
<reference key="8">
    <citation type="journal article" date="2015" name="Am. J. Physiol.">
        <title>The coiled-coil domain of MURC/cavin-4 is involved in membrane trafficking of caveolin-3 in cardiomyocytes.</title>
        <authorList>
            <person name="Naito D."/>
            <person name="Ogata T."/>
            <person name="Hamaoka T."/>
            <person name="Nakanishi N."/>
            <person name="Miyagawa K."/>
            <person name="Maruyama N."/>
            <person name="Kasahara T."/>
            <person name="Taniguchi T."/>
            <person name="Nishi M."/>
            <person name="Matoba S."/>
            <person name="Ueyama T."/>
        </authorList>
    </citation>
    <scope>SUBCELLULAR LOCATION</scope>
</reference>
<comment type="function">
    <text evidence="3 5">May act as a scaffolding protein within caveolar membranes. Interacts directly with G-protein alpha subunits and can functionally regulate their activity. May also regulate voltage-gated potassium channels. Plays a role in the sarcolemma repair mechanism of both skeletal muscle and cardiomyocytes that permits rapid resealing of membranes disrupted by mechanical stress (PubMed:19380584). Mediates the recruitment of CAVIN2 and CAVIN3 proteins to the caveolae (By similarity).</text>
</comment>
<comment type="subunit">
    <text evidence="2 3 5 6 7">Homooligomer. Interacts with DYSF. Interacts with DLG1 and KCNA5; forms a ternary complex. Interacts with DAG1 (via its C-terminal); the interaction prevents binding of DAG1 with DMD (By similarity). Interacts with TRIM72 (PubMed:19380584). Interacts with MUSK; may regulate MUSK signaling (PubMed:19940021). Interacts with POPDC1 (PubMed:24066022). Interacts with CAVIN1, CAVIN2 and CAVIN4 (By similarity).</text>
</comment>
<comment type="interaction">
    <interactant intactId="EBI-298576">
        <id>P51637</id>
    </interactant>
    <interactant intactId="EBI-491143">
        <id>P18762</id>
        <label>Adrb2</label>
    </interactant>
    <organismsDiffer>false</organismsDiffer>
    <experiments>2</experiments>
</comment>
<comment type="interaction">
    <interactant intactId="EBI-298576">
        <id>P51637</id>
    </interactant>
    <interactant intactId="EBI-644904">
        <id>Q01815</id>
        <label>Cacna1c</label>
    </interactant>
    <organismsDiffer>false</organismsDiffer>
    <experiments>4</experiments>
</comment>
<comment type="interaction">
    <interactant intactId="EBI-298576">
        <id>P51637</id>
    </interactant>
    <interactant intactId="EBI-6918583">
        <id>Q5SUG4</id>
        <label>Cacna1g</label>
    </interactant>
    <organismsDiffer>false</organismsDiffer>
    <experiments>3</experiments>
</comment>
<comment type="interaction">
    <interactant intactId="EBI-298576">
        <id>P51637</id>
    </interactant>
    <interactant intactId="EBI-6918775">
        <id>Q6PE92</id>
        <label>Cacna1h</label>
    </interactant>
    <organismsDiffer>false</organismsDiffer>
    <experiments>5</experiments>
</comment>
<comment type="subcellular location">
    <subcellularLocation>
        <location evidence="1">Golgi apparatus membrane</location>
        <topology evidence="1">Peripheral membrane protein</topology>
    </subcellularLocation>
    <subcellularLocation>
        <location evidence="8">Cell membrane</location>
        <topology evidence="1">Peripheral membrane protein</topology>
    </subcellularLocation>
    <subcellularLocation>
        <location evidence="7">Membrane</location>
        <location evidence="7">Caveola</location>
        <topology evidence="1">Peripheral membrane protein</topology>
    </subcellularLocation>
    <subcellularLocation>
        <location evidence="7">Cell membrane</location>
        <location evidence="7">Sarcolemma</location>
    </subcellularLocation>
    <text evidence="1">Potential hairpin-like structure in the membrane. Membrane protein of caveolae (By similarity).</text>
</comment>
<comment type="tissue specificity">
    <text evidence="9">Expressed predominantly in muscle.</text>
</comment>
<comment type="PTM">
    <text evidence="1">Sumoylation with SUMO3 by PIAS4 may reduce agonist-induced internalization and desensitization of adrenergic receptor ABRD2.</text>
</comment>
<comment type="similarity">
    <text evidence="10">Belongs to the caveolin family.</text>
</comment>
<dbReference type="EMBL" id="U36579">
    <property type="protein sequence ID" value="AAC52352.1"/>
    <property type="molecule type" value="mRNA"/>
</dbReference>
<dbReference type="EMBL" id="BC024383">
    <property type="protein sequence ID" value="AAH24383.1"/>
    <property type="molecule type" value="mRNA"/>
</dbReference>
<dbReference type="CCDS" id="CCDS20406.1"/>
<dbReference type="PIR" id="S68222">
    <property type="entry name" value="S68222"/>
</dbReference>
<dbReference type="RefSeq" id="NP_031643.1">
    <property type="nucleotide sequence ID" value="NM_007617.3"/>
</dbReference>
<dbReference type="SMR" id="P51637"/>
<dbReference type="BioGRID" id="198516">
    <property type="interactions" value="8"/>
</dbReference>
<dbReference type="CORUM" id="P51637"/>
<dbReference type="DIP" id="DIP-31069N"/>
<dbReference type="FunCoup" id="P51637">
    <property type="interactions" value="447"/>
</dbReference>
<dbReference type="IntAct" id="P51637">
    <property type="interactions" value="343"/>
</dbReference>
<dbReference type="MINT" id="P51637"/>
<dbReference type="STRING" id="10090.ENSMUSP00000074922"/>
<dbReference type="GlyGen" id="P51637">
    <property type="glycosylation" value="1 site, 1 O-linked glycan (1 site)"/>
</dbReference>
<dbReference type="iPTMnet" id="P51637"/>
<dbReference type="PhosphoSitePlus" id="P51637"/>
<dbReference type="SwissPalm" id="P51637"/>
<dbReference type="jPOST" id="P51637"/>
<dbReference type="PaxDb" id="10090-ENSMUSP00000074922"/>
<dbReference type="PeptideAtlas" id="P51637"/>
<dbReference type="ProteomicsDB" id="265669"/>
<dbReference type="Antibodypedia" id="4305">
    <property type="antibodies" value="284 antibodies from 38 providers"/>
</dbReference>
<dbReference type="DNASU" id="12391"/>
<dbReference type="Ensembl" id="ENSMUST00000075477.8">
    <property type="protein sequence ID" value="ENSMUSP00000074922.7"/>
    <property type="gene ID" value="ENSMUSG00000062694.8"/>
</dbReference>
<dbReference type="GeneID" id="12391"/>
<dbReference type="KEGG" id="mmu:12391"/>
<dbReference type="UCSC" id="uc009dea.1">
    <property type="organism name" value="mouse"/>
</dbReference>
<dbReference type="AGR" id="MGI:107570"/>
<dbReference type="CTD" id="859"/>
<dbReference type="MGI" id="MGI:107570">
    <property type="gene designation" value="Cav3"/>
</dbReference>
<dbReference type="VEuPathDB" id="HostDB:ENSMUSG00000062694"/>
<dbReference type="eggNOG" id="ENOG502RYU9">
    <property type="taxonomic scope" value="Eukaryota"/>
</dbReference>
<dbReference type="GeneTree" id="ENSGT00950000183006"/>
<dbReference type="HOGENOM" id="CLU_102582_0_0_1"/>
<dbReference type="InParanoid" id="P51637"/>
<dbReference type="OMA" id="MCSSIKV"/>
<dbReference type="OrthoDB" id="5917823at2759"/>
<dbReference type="PhylomeDB" id="P51637"/>
<dbReference type="TreeFam" id="TF315736"/>
<dbReference type="BioGRID-ORCS" id="12391">
    <property type="hits" value="3 hits in 76 CRISPR screens"/>
</dbReference>
<dbReference type="PRO" id="PR:P51637"/>
<dbReference type="Proteomes" id="UP000000589">
    <property type="component" value="Chromosome 6"/>
</dbReference>
<dbReference type="RNAct" id="P51637">
    <property type="molecule type" value="protein"/>
</dbReference>
<dbReference type="Bgee" id="ENSMUSG00000062694">
    <property type="expression patterns" value="Expressed in cardiac muscle of left ventricle and 92 other cell types or tissues"/>
</dbReference>
<dbReference type="GO" id="GO:0005901">
    <property type="term" value="C:caveola"/>
    <property type="evidence" value="ECO:0000314"/>
    <property type="project" value="UniProtKB"/>
</dbReference>
<dbReference type="GO" id="GO:0009986">
    <property type="term" value="C:cell surface"/>
    <property type="evidence" value="ECO:0007669"/>
    <property type="project" value="Ensembl"/>
</dbReference>
<dbReference type="GO" id="GO:0016010">
    <property type="term" value="C:dystrophin-associated glycoprotein complex"/>
    <property type="evidence" value="ECO:0007669"/>
    <property type="project" value="Ensembl"/>
</dbReference>
<dbReference type="GO" id="GO:0005783">
    <property type="term" value="C:endoplasmic reticulum"/>
    <property type="evidence" value="ECO:0000266"/>
    <property type="project" value="MGI"/>
</dbReference>
<dbReference type="GO" id="GO:0000139">
    <property type="term" value="C:Golgi membrane"/>
    <property type="evidence" value="ECO:0007669"/>
    <property type="project" value="UniProtKB-SubCell"/>
</dbReference>
<dbReference type="GO" id="GO:0014704">
    <property type="term" value="C:intercalated disc"/>
    <property type="evidence" value="ECO:0007669"/>
    <property type="project" value="Ensembl"/>
</dbReference>
<dbReference type="GO" id="GO:0016020">
    <property type="term" value="C:membrane"/>
    <property type="evidence" value="ECO:0000314"/>
    <property type="project" value="MGI"/>
</dbReference>
<dbReference type="GO" id="GO:0045121">
    <property type="term" value="C:membrane raft"/>
    <property type="evidence" value="ECO:0000314"/>
    <property type="project" value="MGI"/>
</dbReference>
<dbReference type="GO" id="GO:0031594">
    <property type="term" value="C:neuromuscular junction"/>
    <property type="evidence" value="ECO:0007669"/>
    <property type="project" value="Ensembl"/>
</dbReference>
<dbReference type="GO" id="GO:0005886">
    <property type="term" value="C:plasma membrane"/>
    <property type="evidence" value="ECO:0000314"/>
    <property type="project" value="UniProtKB"/>
</dbReference>
<dbReference type="GO" id="GO:0042383">
    <property type="term" value="C:sarcolemma"/>
    <property type="evidence" value="ECO:0000314"/>
    <property type="project" value="UniProtKB"/>
</dbReference>
<dbReference type="GO" id="GO:0030315">
    <property type="term" value="C:T-tubule"/>
    <property type="evidence" value="ECO:0000314"/>
    <property type="project" value="MGI"/>
</dbReference>
<dbReference type="GO" id="GO:0031982">
    <property type="term" value="C:vesicle"/>
    <property type="evidence" value="ECO:0007669"/>
    <property type="project" value="Ensembl"/>
</dbReference>
<dbReference type="GO" id="GO:0030018">
    <property type="term" value="C:Z disc"/>
    <property type="evidence" value="ECO:0007669"/>
    <property type="project" value="Ensembl"/>
</dbReference>
<dbReference type="GO" id="GO:0043014">
    <property type="term" value="F:alpha-tubulin binding"/>
    <property type="evidence" value="ECO:0000314"/>
    <property type="project" value="MGI"/>
</dbReference>
<dbReference type="GO" id="GO:0005246">
    <property type="term" value="F:calcium channel regulator activity"/>
    <property type="evidence" value="ECO:0007669"/>
    <property type="project" value="Ensembl"/>
</dbReference>
<dbReference type="GO" id="GO:0071253">
    <property type="term" value="F:connexin binding"/>
    <property type="evidence" value="ECO:0000353"/>
    <property type="project" value="BHF-UCL"/>
</dbReference>
<dbReference type="GO" id="GO:0060090">
    <property type="term" value="F:molecular adaptor activity"/>
    <property type="evidence" value="ECO:0007669"/>
    <property type="project" value="Ensembl"/>
</dbReference>
<dbReference type="GO" id="GO:0050998">
    <property type="term" value="F:nitric-oxide synthase binding"/>
    <property type="evidence" value="ECO:0007669"/>
    <property type="project" value="Ensembl"/>
</dbReference>
<dbReference type="GO" id="GO:0019870">
    <property type="term" value="F:potassium channel inhibitor activity"/>
    <property type="evidence" value="ECO:0007669"/>
    <property type="project" value="Ensembl"/>
</dbReference>
<dbReference type="GO" id="GO:0044877">
    <property type="term" value="F:protein-containing complex binding"/>
    <property type="evidence" value="ECO:0007669"/>
    <property type="project" value="Ensembl"/>
</dbReference>
<dbReference type="GO" id="GO:0017080">
    <property type="term" value="F:sodium channel regulator activity"/>
    <property type="evidence" value="ECO:0007669"/>
    <property type="project" value="Ensembl"/>
</dbReference>
<dbReference type="GO" id="GO:0044325">
    <property type="term" value="F:transmembrane transporter binding"/>
    <property type="evidence" value="ECO:0000353"/>
    <property type="project" value="MGI"/>
</dbReference>
<dbReference type="GO" id="GO:0007015">
    <property type="term" value="P:actin filament organization"/>
    <property type="evidence" value="ECO:0000315"/>
    <property type="project" value="MGI"/>
</dbReference>
<dbReference type="GO" id="GO:0006816">
    <property type="term" value="P:calcium ion transport"/>
    <property type="evidence" value="ECO:0000315"/>
    <property type="project" value="MGI"/>
</dbReference>
<dbReference type="GO" id="GO:0055013">
    <property type="term" value="P:cardiac muscle cell development"/>
    <property type="evidence" value="ECO:0000315"/>
    <property type="project" value="MGI"/>
</dbReference>
<dbReference type="GO" id="GO:0003300">
    <property type="term" value="P:cardiac muscle hypertrophy"/>
    <property type="evidence" value="ECO:0000315"/>
    <property type="project" value="MGI"/>
</dbReference>
<dbReference type="GO" id="GO:0070836">
    <property type="term" value="P:caveola assembly"/>
    <property type="evidence" value="ECO:0000315"/>
    <property type="project" value="MGI"/>
</dbReference>
<dbReference type="GO" id="GO:1904637">
    <property type="term" value="P:cellular response to ionomycin"/>
    <property type="evidence" value="ECO:0007669"/>
    <property type="project" value="Ensembl"/>
</dbReference>
<dbReference type="GO" id="GO:0042632">
    <property type="term" value="P:cholesterol homeostasis"/>
    <property type="evidence" value="ECO:0000315"/>
    <property type="project" value="MGI"/>
</dbReference>
<dbReference type="GO" id="GO:0031122">
    <property type="term" value="P:cytoplasmic microtubule organization"/>
    <property type="evidence" value="ECO:0000315"/>
    <property type="project" value="MGI"/>
</dbReference>
<dbReference type="GO" id="GO:0035995">
    <property type="term" value="P:detection of muscle stretch"/>
    <property type="evidence" value="ECO:0000315"/>
    <property type="project" value="BHF-UCL"/>
</dbReference>
<dbReference type="GO" id="GO:0006897">
    <property type="term" value="P:endocytosis"/>
    <property type="evidence" value="ECO:0000315"/>
    <property type="project" value="MGI"/>
</dbReference>
<dbReference type="GO" id="GO:0051649">
    <property type="term" value="P:establishment of localization in cell"/>
    <property type="evidence" value="ECO:0000315"/>
    <property type="project" value="MGI"/>
</dbReference>
<dbReference type="GO" id="GO:0042593">
    <property type="term" value="P:glucose homeostasis"/>
    <property type="evidence" value="ECO:0000315"/>
    <property type="project" value="MGI"/>
</dbReference>
<dbReference type="GO" id="GO:0060347">
    <property type="term" value="P:heart trabecula formation"/>
    <property type="evidence" value="ECO:0000315"/>
    <property type="project" value="MGI"/>
</dbReference>
<dbReference type="GO" id="GO:0000165">
    <property type="term" value="P:MAPK cascade"/>
    <property type="evidence" value="ECO:0000315"/>
    <property type="project" value="MGI"/>
</dbReference>
<dbReference type="GO" id="GO:0031579">
    <property type="term" value="P:membrane raft organization"/>
    <property type="evidence" value="ECO:0000315"/>
    <property type="project" value="MGI"/>
</dbReference>
<dbReference type="GO" id="GO:0007520">
    <property type="term" value="P:myoblast fusion"/>
    <property type="evidence" value="ECO:0000315"/>
    <property type="project" value="MGI"/>
</dbReference>
<dbReference type="GO" id="GO:0014902">
    <property type="term" value="P:myotube differentiation"/>
    <property type="evidence" value="ECO:0000315"/>
    <property type="project" value="MGI"/>
</dbReference>
<dbReference type="GO" id="GO:0051926">
    <property type="term" value="P:negative regulation of calcium ion transport"/>
    <property type="evidence" value="ECO:0000315"/>
    <property type="project" value="MGI"/>
</dbReference>
<dbReference type="GO" id="GO:0010614">
    <property type="term" value="P:negative regulation of cardiac muscle hypertrophy"/>
    <property type="evidence" value="ECO:0000315"/>
    <property type="project" value="MGI"/>
</dbReference>
<dbReference type="GO" id="GO:0061052">
    <property type="term" value="P:negative regulation of cell growth involved in cardiac muscle cell development"/>
    <property type="evidence" value="ECO:0007669"/>
    <property type="project" value="Ensembl"/>
</dbReference>
<dbReference type="GO" id="GO:0045792">
    <property type="term" value="P:negative regulation of cell size"/>
    <property type="evidence" value="ECO:0007669"/>
    <property type="project" value="Ensembl"/>
</dbReference>
<dbReference type="GO" id="GO:0043409">
    <property type="term" value="P:negative regulation of MAPK cascade"/>
    <property type="evidence" value="ECO:0000315"/>
    <property type="project" value="MGI"/>
</dbReference>
<dbReference type="GO" id="GO:1900826">
    <property type="term" value="P:negative regulation of membrane depolarization during cardiac muscle cell action potential"/>
    <property type="evidence" value="ECO:0000315"/>
    <property type="project" value="BHF-UCL"/>
</dbReference>
<dbReference type="GO" id="GO:1901380">
    <property type="term" value="P:negative regulation of potassium ion transmembrane transport"/>
    <property type="evidence" value="ECO:0007669"/>
    <property type="project" value="Ensembl"/>
</dbReference>
<dbReference type="GO" id="GO:0060299">
    <property type="term" value="P:negative regulation of sarcomere organization"/>
    <property type="evidence" value="ECO:0007669"/>
    <property type="project" value="Ensembl"/>
</dbReference>
<dbReference type="GO" id="GO:0051647">
    <property type="term" value="P:nucleus localization"/>
    <property type="evidence" value="ECO:0000315"/>
    <property type="project" value="MGI"/>
</dbReference>
<dbReference type="GO" id="GO:0007009">
    <property type="term" value="P:plasma membrane organization"/>
    <property type="evidence" value="ECO:0000315"/>
    <property type="project" value="MGI"/>
</dbReference>
<dbReference type="GO" id="GO:0001778">
    <property type="term" value="P:plasma membrane repair"/>
    <property type="evidence" value="ECO:0000315"/>
    <property type="project" value="MGI"/>
</dbReference>
<dbReference type="GO" id="GO:2001288">
    <property type="term" value="P:positive regulation of caveolin-mediated endocytosis"/>
    <property type="evidence" value="ECO:0007669"/>
    <property type="project" value="Ensembl"/>
</dbReference>
<dbReference type="GO" id="GO:0008284">
    <property type="term" value="P:positive regulation of cell population proliferation"/>
    <property type="evidence" value="ECO:0007669"/>
    <property type="project" value="Ensembl"/>
</dbReference>
<dbReference type="GO" id="GO:0007204">
    <property type="term" value="P:positive regulation of cytosolic calcium ion concentration"/>
    <property type="evidence" value="ECO:0007669"/>
    <property type="project" value="Ensembl"/>
</dbReference>
<dbReference type="GO" id="GO:0031116">
    <property type="term" value="P:positive regulation of microtubule polymerization"/>
    <property type="evidence" value="ECO:0007669"/>
    <property type="project" value="Ensembl"/>
</dbReference>
<dbReference type="GO" id="GO:0010831">
    <property type="term" value="P:positive regulation of myotube differentiation"/>
    <property type="evidence" value="ECO:0000315"/>
    <property type="project" value="MGI"/>
</dbReference>
<dbReference type="GO" id="GO:0008104">
    <property type="term" value="P:protein localization"/>
    <property type="evidence" value="ECO:0000315"/>
    <property type="project" value="MGI"/>
</dbReference>
<dbReference type="GO" id="GO:0072659">
    <property type="term" value="P:protein localization to plasma membrane"/>
    <property type="evidence" value="ECO:0000315"/>
    <property type="project" value="MGI"/>
</dbReference>
<dbReference type="GO" id="GO:0060762">
    <property type="term" value="P:regulation of branching involved in mammary gland duct morphogenesis"/>
    <property type="evidence" value="ECO:0000315"/>
    <property type="project" value="MGI"/>
</dbReference>
<dbReference type="GO" id="GO:0090279">
    <property type="term" value="P:regulation of calcium ion import"/>
    <property type="evidence" value="ECO:0007669"/>
    <property type="project" value="Ensembl"/>
</dbReference>
<dbReference type="GO" id="GO:0051924">
    <property type="term" value="P:regulation of calcium ion transport"/>
    <property type="evidence" value="ECO:0000315"/>
    <property type="project" value="MGI"/>
</dbReference>
<dbReference type="GO" id="GO:0098909">
    <property type="term" value="P:regulation of cardiac muscle cell action potential involved in regulation of contraction"/>
    <property type="evidence" value="ECO:0007669"/>
    <property type="project" value="Ensembl"/>
</dbReference>
<dbReference type="GO" id="GO:0002027">
    <property type="term" value="P:regulation of heart rate"/>
    <property type="evidence" value="ECO:0007669"/>
    <property type="project" value="Ensembl"/>
</dbReference>
<dbReference type="GO" id="GO:0042391">
    <property type="term" value="P:regulation of membrane potential"/>
    <property type="evidence" value="ECO:0000316"/>
    <property type="project" value="MGI"/>
</dbReference>
<dbReference type="GO" id="GO:1900744">
    <property type="term" value="P:regulation of p38MAPK cascade"/>
    <property type="evidence" value="ECO:0000315"/>
    <property type="project" value="MGI"/>
</dbReference>
<dbReference type="GO" id="GO:0051896">
    <property type="term" value="P:regulation of phosphatidylinositol 3-kinase/protein kinase B signal transduction"/>
    <property type="evidence" value="ECO:0000315"/>
    <property type="project" value="MGI"/>
</dbReference>
<dbReference type="GO" id="GO:0038009">
    <property type="term" value="P:regulation of signal transduction by receptor internalization"/>
    <property type="evidence" value="ECO:0000266"/>
    <property type="project" value="MGI"/>
</dbReference>
<dbReference type="GO" id="GO:0014819">
    <property type="term" value="P:regulation of skeletal muscle contraction"/>
    <property type="evidence" value="ECO:0007669"/>
    <property type="project" value="Ensembl"/>
</dbReference>
<dbReference type="GO" id="GO:1902305">
    <property type="term" value="P:regulation of sodium ion transmembrane transport"/>
    <property type="evidence" value="ECO:0007669"/>
    <property type="project" value="Ensembl"/>
</dbReference>
<dbReference type="GO" id="GO:0017015">
    <property type="term" value="P:regulation of transforming growth factor beta receptor signaling pathway"/>
    <property type="evidence" value="ECO:0000315"/>
    <property type="project" value="MGI"/>
</dbReference>
<dbReference type="GO" id="GO:0060373">
    <property type="term" value="P:regulation of ventricular cardiac muscle cell membrane depolarization"/>
    <property type="evidence" value="ECO:0007669"/>
    <property type="project" value="Ensembl"/>
</dbReference>
<dbReference type="GO" id="GO:0060307">
    <property type="term" value="P:regulation of ventricular cardiac muscle cell membrane repolarization"/>
    <property type="evidence" value="ECO:0007669"/>
    <property type="project" value="Ensembl"/>
</dbReference>
<dbReference type="GO" id="GO:0001666">
    <property type="term" value="P:response to hypoxia"/>
    <property type="evidence" value="ECO:0007669"/>
    <property type="project" value="Ensembl"/>
</dbReference>
<dbReference type="GO" id="GO:0002931">
    <property type="term" value="P:response to ischemia"/>
    <property type="evidence" value="ECO:0007669"/>
    <property type="project" value="Ensembl"/>
</dbReference>
<dbReference type="GO" id="GO:0006641">
    <property type="term" value="P:triglyceride metabolic process"/>
    <property type="evidence" value="ECO:0000315"/>
    <property type="project" value="MGI"/>
</dbReference>
<dbReference type="GO" id="GO:0086005">
    <property type="term" value="P:ventricular cardiac muscle cell action potential"/>
    <property type="evidence" value="ECO:0007669"/>
    <property type="project" value="Ensembl"/>
</dbReference>
<dbReference type="InterPro" id="IPR001612">
    <property type="entry name" value="Caveolin"/>
</dbReference>
<dbReference type="InterPro" id="IPR018361">
    <property type="entry name" value="Caveolin_CS"/>
</dbReference>
<dbReference type="PANTHER" id="PTHR10844">
    <property type="entry name" value="CAVEOLIN"/>
    <property type="match status" value="1"/>
</dbReference>
<dbReference type="PANTHER" id="PTHR10844:SF16">
    <property type="entry name" value="CAVEOLIN-3"/>
    <property type="match status" value="1"/>
</dbReference>
<dbReference type="Pfam" id="PF01146">
    <property type="entry name" value="Caveolin"/>
    <property type="match status" value="1"/>
</dbReference>
<dbReference type="PROSITE" id="PS01210">
    <property type="entry name" value="CAVEOLIN"/>
    <property type="match status" value="1"/>
</dbReference>
<name>CAV3_MOUSE</name>
<feature type="chain" id="PRO_0000144141" description="Caveolin-3">
    <location>
        <begin position="1"/>
        <end position="151"/>
    </location>
</feature>
<feature type="topological domain" description="Cytoplasmic" evidence="4">
    <location>
        <begin position="1"/>
        <end position="83"/>
    </location>
</feature>
<feature type="intramembrane region" description="Helical" evidence="4">
    <location>
        <begin position="84"/>
        <end position="104"/>
    </location>
</feature>
<feature type="topological domain" description="Cytoplasmic" evidence="4">
    <location>
        <begin position="105"/>
        <end position="151"/>
    </location>
</feature>
<feature type="region of interest" description="Required for interaction with DAG1" evidence="1">
    <location>
        <begin position="64"/>
        <end position="114"/>
    </location>
</feature>
<feature type="cross-link" description="Glycyl lysine isopeptide (Lys-Gly) (interchain with G-Cter in SUMO3)" evidence="1">
    <location>
        <position position="38"/>
    </location>
</feature>
<feature type="mutagenesis site" description="Results in aberrent localization of TRIM72 and defects in membrane repair." evidence="5">
    <original>R</original>
    <variation>Q</variation>
    <location>
        <position position="27"/>
    </location>
</feature>
<feature type="mutagenesis site" description="Dominant-negative mutant that induces defects in membrane repair." evidence="5">
    <original>P</original>
    <variation>L</variation>
    <location>
        <position position="105"/>
    </location>
</feature>
<gene>
    <name evidence="11" type="primary">Cav3</name>
</gene>
<sequence>MMTEEHTDLEARIIKDIHCKEIDLVNRDPKNINEDIVKVDFEDVIAEPEGTYSFDGVWKVSFTTFTVSKYWCYRLLSTLLGVPLALLWGFLFACISFCHIWAVVPCIKSYLIEIQCISHIYSLCIRTFCNPLFAALGQVCSNIKVVLRREG</sequence>
<protein>
    <recommendedName>
        <fullName evidence="11">Caveolin-3</fullName>
    </recommendedName>
    <alternativeName>
        <fullName>M-caveolin</fullName>
    </alternativeName>
</protein>
<evidence type="ECO:0000250" key="1"/>
<evidence type="ECO:0000250" key="2">
    <source>
        <dbReference type="UniProtKB" id="P51638"/>
    </source>
</evidence>
<evidence type="ECO:0000250" key="3">
    <source>
        <dbReference type="UniProtKB" id="P56539"/>
    </source>
</evidence>
<evidence type="ECO:0000255" key="4"/>
<evidence type="ECO:0000269" key="5">
    <source>
    </source>
</evidence>
<evidence type="ECO:0000269" key="6">
    <source>
    </source>
</evidence>
<evidence type="ECO:0000269" key="7">
    <source>
    </source>
</evidence>
<evidence type="ECO:0000269" key="8">
    <source>
    </source>
</evidence>
<evidence type="ECO:0000269" key="9">
    <source>
    </source>
</evidence>
<evidence type="ECO:0000305" key="10"/>
<evidence type="ECO:0000312" key="11">
    <source>
        <dbReference type="MGI" id="MGI:107570"/>
    </source>
</evidence>
<accession>P51637</accession>
<organism>
    <name type="scientific">Mus musculus</name>
    <name type="common">Mouse</name>
    <dbReference type="NCBI Taxonomy" id="10090"/>
    <lineage>
        <taxon>Eukaryota</taxon>
        <taxon>Metazoa</taxon>
        <taxon>Chordata</taxon>
        <taxon>Craniata</taxon>
        <taxon>Vertebrata</taxon>
        <taxon>Euteleostomi</taxon>
        <taxon>Mammalia</taxon>
        <taxon>Eutheria</taxon>
        <taxon>Euarchontoglires</taxon>
        <taxon>Glires</taxon>
        <taxon>Rodentia</taxon>
        <taxon>Myomorpha</taxon>
        <taxon>Muroidea</taxon>
        <taxon>Muridae</taxon>
        <taxon>Murinae</taxon>
        <taxon>Mus</taxon>
        <taxon>Mus</taxon>
    </lineage>
</organism>